<name>TGT_NITEU</name>
<accession>Q82VF0</accession>
<keyword id="KW-0328">Glycosyltransferase</keyword>
<keyword id="KW-0479">Metal-binding</keyword>
<keyword id="KW-0671">Queuosine biosynthesis</keyword>
<keyword id="KW-1185">Reference proteome</keyword>
<keyword id="KW-0808">Transferase</keyword>
<keyword id="KW-0819">tRNA processing</keyword>
<keyword id="KW-0862">Zinc</keyword>
<feature type="chain" id="PRO_0000135497" description="Queuine tRNA-ribosyltransferase">
    <location>
        <begin position="1"/>
        <end position="371"/>
    </location>
</feature>
<feature type="region of interest" description="RNA binding" evidence="1">
    <location>
        <begin position="243"/>
        <end position="249"/>
    </location>
</feature>
<feature type="region of interest" description="RNA binding; important for wobble base 34 recognition" evidence="1">
    <location>
        <begin position="267"/>
        <end position="271"/>
    </location>
</feature>
<feature type="active site" description="Proton acceptor" evidence="1">
    <location>
        <position position="89"/>
    </location>
</feature>
<feature type="active site" description="Nucleophile" evidence="1">
    <location>
        <position position="262"/>
    </location>
</feature>
<feature type="binding site" evidence="1">
    <location>
        <begin position="89"/>
        <end position="93"/>
    </location>
    <ligand>
        <name>substrate</name>
    </ligand>
</feature>
<feature type="binding site" evidence="1">
    <location>
        <position position="143"/>
    </location>
    <ligand>
        <name>substrate</name>
    </ligand>
</feature>
<feature type="binding site" evidence="1">
    <location>
        <position position="185"/>
    </location>
    <ligand>
        <name>substrate</name>
    </ligand>
</feature>
<feature type="binding site" evidence="1">
    <location>
        <position position="212"/>
    </location>
    <ligand>
        <name>substrate</name>
    </ligand>
</feature>
<feature type="binding site" evidence="1">
    <location>
        <position position="300"/>
    </location>
    <ligand>
        <name>Zn(2+)</name>
        <dbReference type="ChEBI" id="CHEBI:29105"/>
    </ligand>
</feature>
<feature type="binding site" evidence="1">
    <location>
        <position position="302"/>
    </location>
    <ligand>
        <name>Zn(2+)</name>
        <dbReference type="ChEBI" id="CHEBI:29105"/>
    </ligand>
</feature>
<feature type="binding site" evidence="1">
    <location>
        <position position="305"/>
    </location>
    <ligand>
        <name>Zn(2+)</name>
        <dbReference type="ChEBI" id="CHEBI:29105"/>
    </ligand>
</feature>
<feature type="binding site" evidence="1">
    <location>
        <position position="331"/>
    </location>
    <ligand>
        <name>Zn(2+)</name>
        <dbReference type="ChEBI" id="CHEBI:29105"/>
    </ligand>
</feature>
<organism>
    <name type="scientific">Nitrosomonas europaea (strain ATCC 19718 / CIP 103999 / KCTC 2705 / NBRC 14298)</name>
    <dbReference type="NCBI Taxonomy" id="228410"/>
    <lineage>
        <taxon>Bacteria</taxon>
        <taxon>Pseudomonadati</taxon>
        <taxon>Pseudomonadota</taxon>
        <taxon>Betaproteobacteria</taxon>
        <taxon>Nitrosomonadales</taxon>
        <taxon>Nitrosomonadaceae</taxon>
        <taxon>Nitrosomonas</taxon>
    </lineage>
</organism>
<sequence>MKFQLHCRDHEARRGTLTLAHGTVETPAFMPVGTYGAVKGLSPDELHTLGAGIILGNTFHLWLRPGLEVIGAHGGLHRLMNWDGPILTDSGGFQVFSLGALRKICEEGVRFRSPVNGDTCFLTPEESMRIQQVLNSDIVMIFDECTPYPVDMQIAESSMQLSLRWAERSKTAHAGNPNALFGIVQGGMYESLRDHSAAGLCAIGFDGYAIGGLSVGEPKADMQRILRHTAPQLPADKPRYLMGVGTPEDIVHAVAQGIDLFDCVLPTRNARNGWLYTSQGILRLRNSRYRLDTSPPDEHCDCYTCRHFTRAYLHHLQRTGEMLGARLNSLHNLHYYQRLMANIRKAIETGQFEQFARKFSGQDFMLKCASV</sequence>
<comment type="function">
    <text evidence="1">Catalyzes the base-exchange of a guanine (G) residue with the queuine precursor 7-aminomethyl-7-deazaguanine (PreQ1) at position 34 (anticodon wobble position) in tRNAs with GU(N) anticodons (tRNA-Asp, -Asn, -His and -Tyr). Catalysis occurs through a double-displacement mechanism. The nucleophile active site attacks the C1' of nucleotide 34 to detach the guanine base from the RNA, forming a covalent enzyme-RNA intermediate. The proton acceptor active site deprotonates the incoming PreQ1, allowing a nucleophilic attack on the C1' of the ribose to form the product. After dissociation, two additional enzymatic reactions on the tRNA convert PreQ1 to queuine (Q), resulting in the hypermodified nucleoside queuosine (7-(((4,5-cis-dihydroxy-2-cyclopenten-1-yl)amino)methyl)-7-deazaguanosine).</text>
</comment>
<comment type="catalytic activity">
    <reaction evidence="1">
        <text>7-aminomethyl-7-carbaguanine + guanosine(34) in tRNA = 7-aminomethyl-7-carbaguanosine(34) in tRNA + guanine</text>
        <dbReference type="Rhea" id="RHEA:24104"/>
        <dbReference type="Rhea" id="RHEA-COMP:10341"/>
        <dbReference type="Rhea" id="RHEA-COMP:10342"/>
        <dbReference type="ChEBI" id="CHEBI:16235"/>
        <dbReference type="ChEBI" id="CHEBI:58703"/>
        <dbReference type="ChEBI" id="CHEBI:74269"/>
        <dbReference type="ChEBI" id="CHEBI:82833"/>
        <dbReference type="EC" id="2.4.2.29"/>
    </reaction>
</comment>
<comment type="cofactor">
    <cofactor evidence="1">
        <name>Zn(2+)</name>
        <dbReference type="ChEBI" id="CHEBI:29105"/>
    </cofactor>
    <text evidence="1">Binds 1 zinc ion per subunit.</text>
</comment>
<comment type="pathway">
    <text evidence="1">tRNA modification; tRNA-queuosine biosynthesis.</text>
</comment>
<comment type="subunit">
    <text evidence="1">Homodimer. Within each dimer, one monomer is responsible for RNA recognition and catalysis, while the other monomer binds to the replacement base PreQ1.</text>
</comment>
<comment type="similarity">
    <text evidence="1">Belongs to the queuine tRNA-ribosyltransferase family.</text>
</comment>
<evidence type="ECO:0000255" key="1">
    <source>
        <dbReference type="HAMAP-Rule" id="MF_00168"/>
    </source>
</evidence>
<dbReference type="EC" id="2.4.2.29" evidence="1"/>
<dbReference type="EMBL" id="AL954747">
    <property type="protein sequence ID" value="CAD85052.1"/>
    <property type="molecule type" value="Genomic_DNA"/>
</dbReference>
<dbReference type="RefSeq" id="WP_011111732.1">
    <property type="nucleotide sequence ID" value="NC_004757.1"/>
</dbReference>
<dbReference type="SMR" id="Q82VF0"/>
<dbReference type="STRING" id="228410.NE1141"/>
<dbReference type="GeneID" id="87104318"/>
<dbReference type="KEGG" id="neu:NE1141"/>
<dbReference type="eggNOG" id="COG0343">
    <property type="taxonomic scope" value="Bacteria"/>
</dbReference>
<dbReference type="HOGENOM" id="CLU_022060_0_1_4"/>
<dbReference type="OrthoDB" id="9805417at2"/>
<dbReference type="PhylomeDB" id="Q82VF0"/>
<dbReference type="UniPathway" id="UPA00392"/>
<dbReference type="Proteomes" id="UP000001416">
    <property type="component" value="Chromosome"/>
</dbReference>
<dbReference type="GO" id="GO:0005829">
    <property type="term" value="C:cytosol"/>
    <property type="evidence" value="ECO:0007669"/>
    <property type="project" value="TreeGrafter"/>
</dbReference>
<dbReference type="GO" id="GO:0046872">
    <property type="term" value="F:metal ion binding"/>
    <property type="evidence" value="ECO:0007669"/>
    <property type="project" value="UniProtKB-KW"/>
</dbReference>
<dbReference type="GO" id="GO:0008479">
    <property type="term" value="F:tRNA-guanosine(34) queuine transglycosylase activity"/>
    <property type="evidence" value="ECO:0007669"/>
    <property type="project" value="UniProtKB-UniRule"/>
</dbReference>
<dbReference type="GO" id="GO:0008616">
    <property type="term" value="P:queuosine biosynthetic process"/>
    <property type="evidence" value="ECO:0007669"/>
    <property type="project" value="UniProtKB-UniRule"/>
</dbReference>
<dbReference type="GO" id="GO:0002099">
    <property type="term" value="P:tRNA wobble guanine modification"/>
    <property type="evidence" value="ECO:0007669"/>
    <property type="project" value="TreeGrafter"/>
</dbReference>
<dbReference type="GO" id="GO:0101030">
    <property type="term" value="P:tRNA-guanine transglycosylation"/>
    <property type="evidence" value="ECO:0007669"/>
    <property type="project" value="InterPro"/>
</dbReference>
<dbReference type="FunFam" id="3.20.20.105:FF:000001">
    <property type="entry name" value="Queuine tRNA-ribosyltransferase"/>
    <property type="match status" value="1"/>
</dbReference>
<dbReference type="Gene3D" id="3.20.20.105">
    <property type="entry name" value="Queuine tRNA-ribosyltransferase-like"/>
    <property type="match status" value="1"/>
</dbReference>
<dbReference type="HAMAP" id="MF_00168">
    <property type="entry name" value="Q_tRNA_Tgt"/>
    <property type="match status" value="1"/>
</dbReference>
<dbReference type="InterPro" id="IPR050076">
    <property type="entry name" value="ArchSynthase1/Queuine_TRR"/>
</dbReference>
<dbReference type="InterPro" id="IPR004803">
    <property type="entry name" value="TGT"/>
</dbReference>
<dbReference type="InterPro" id="IPR036511">
    <property type="entry name" value="TGT-like_sf"/>
</dbReference>
<dbReference type="InterPro" id="IPR002616">
    <property type="entry name" value="tRNA_ribo_trans-like"/>
</dbReference>
<dbReference type="NCBIfam" id="TIGR00430">
    <property type="entry name" value="Q_tRNA_tgt"/>
    <property type="match status" value="1"/>
</dbReference>
<dbReference type="NCBIfam" id="TIGR00449">
    <property type="entry name" value="tgt_general"/>
    <property type="match status" value="1"/>
</dbReference>
<dbReference type="PANTHER" id="PTHR46499">
    <property type="entry name" value="QUEUINE TRNA-RIBOSYLTRANSFERASE"/>
    <property type="match status" value="1"/>
</dbReference>
<dbReference type="PANTHER" id="PTHR46499:SF1">
    <property type="entry name" value="QUEUINE TRNA-RIBOSYLTRANSFERASE"/>
    <property type="match status" value="1"/>
</dbReference>
<dbReference type="Pfam" id="PF01702">
    <property type="entry name" value="TGT"/>
    <property type="match status" value="1"/>
</dbReference>
<dbReference type="SUPFAM" id="SSF51713">
    <property type="entry name" value="tRNA-guanine transglycosylase"/>
    <property type="match status" value="1"/>
</dbReference>
<proteinExistence type="inferred from homology"/>
<reference key="1">
    <citation type="journal article" date="2003" name="J. Bacteriol.">
        <title>Complete genome sequence of the ammonia-oxidizing bacterium and obligate chemolithoautotroph Nitrosomonas europaea.</title>
        <authorList>
            <person name="Chain P."/>
            <person name="Lamerdin J.E."/>
            <person name="Larimer F.W."/>
            <person name="Regala W."/>
            <person name="Lao V."/>
            <person name="Land M.L."/>
            <person name="Hauser L."/>
            <person name="Hooper A.B."/>
            <person name="Klotz M.G."/>
            <person name="Norton J."/>
            <person name="Sayavedra-Soto L.A."/>
            <person name="Arciero D.M."/>
            <person name="Hommes N.G."/>
            <person name="Whittaker M.M."/>
            <person name="Arp D.J."/>
        </authorList>
    </citation>
    <scope>NUCLEOTIDE SEQUENCE [LARGE SCALE GENOMIC DNA]</scope>
    <source>
        <strain>ATCC 19718 / CIP 103999 / KCTC 2705 / NBRC 14298</strain>
    </source>
</reference>
<gene>
    <name evidence="1" type="primary">tgt</name>
    <name type="ordered locus">NE1141</name>
</gene>
<protein>
    <recommendedName>
        <fullName evidence="1">Queuine tRNA-ribosyltransferase</fullName>
        <ecNumber evidence="1">2.4.2.29</ecNumber>
    </recommendedName>
    <alternativeName>
        <fullName evidence="1">Guanine insertion enzyme</fullName>
    </alternativeName>
    <alternativeName>
        <fullName evidence="1">tRNA-guanine transglycosylase</fullName>
    </alternativeName>
</protein>